<keyword id="KW-1003">Cell membrane</keyword>
<keyword id="KW-0204">Cytolysis</keyword>
<keyword id="KW-0472">Membrane</keyword>
<keyword id="KW-0812">Transmembrane</keyword>
<keyword id="KW-1133">Transmembrane helix</keyword>
<reference key="1">
    <citation type="journal article" date="2004" name="Proc. Natl. Acad. Sci. U.S.A.">
        <title>Complete genomes of two clinical Staphylococcus aureus strains: evidence for the rapid evolution of virulence and drug resistance.</title>
        <authorList>
            <person name="Holden M.T.G."/>
            <person name="Feil E.J."/>
            <person name="Lindsay J.A."/>
            <person name="Peacock S.J."/>
            <person name="Day N.P.J."/>
            <person name="Enright M.C."/>
            <person name="Foster T.J."/>
            <person name="Moore C.E."/>
            <person name="Hurst L."/>
            <person name="Atkin R."/>
            <person name="Barron A."/>
            <person name="Bason N."/>
            <person name="Bentley S.D."/>
            <person name="Chillingworth C."/>
            <person name="Chillingworth T."/>
            <person name="Churcher C."/>
            <person name="Clark L."/>
            <person name="Corton C."/>
            <person name="Cronin A."/>
            <person name="Doggett J."/>
            <person name="Dowd L."/>
            <person name="Feltwell T."/>
            <person name="Hance Z."/>
            <person name="Harris B."/>
            <person name="Hauser H."/>
            <person name="Holroyd S."/>
            <person name="Jagels K."/>
            <person name="James K.D."/>
            <person name="Lennard N."/>
            <person name="Line A."/>
            <person name="Mayes R."/>
            <person name="Moule S."/>
            <person name="Mungall K."/>
            <person name="Ormond D."/>
            <person name="Quail M.A."/>
            <person name="Rabbinowitsch E."/>
            <person name="Rutherford K.M."/>
            <person name="Sanders M."/>
            <person name="Sharp S."/>
            <person name="Simmonds M."/>
            <person name="Stevens K."/>
            <person name="Whitehead S."/>
            <person name="Barrell B.G."/>
            <person name="Spratt B.G."/>
            <person name="Parkhill J."/>
        </authorList>
    </citation>
    <scope>NUCLEOTIDE SEQUENCE [LARGE SCALE GENOMIC DNA]</scope>
    <source>
        <strain>MSSA476</strain>
    </source>
</reference>
<feature type="chain" id="PRO_0000217060" description="Antiholin-like protein LrgB">
    <location>
        <begin position="1"/>
        <end position="233"/>
    </location>
</feature>
<feature type="transmembrane region" description="Helical" evidence="1">
    <location>
        <begin position="9"/>
        <end position="29"/>
    </location>
</feature>
<feature type="transmembrane region" description="Helical" evidence="1">
    <location>
        <begin position="34"/>
        <end position="54"/>
    </location>
</feature>
<feature type="transmembrane region" description="Helical" evidence="1">
    <location>
        <begin position="63"/>
        <end position="83"/>
    </location>
</feature>
<feature type="transmembrane region" description="Helical" evidence="1">
    <location>
        <begin position="97"/>
        <end position="117"/>
    </location>
</feature>
<feature type="transmembrane region" description="Helical" evidence="1">
    <location>
        <begin position="121"/>
        <end position="141"/>
    </location>
</feature>
<feature type="transmembrane region" description="Helical" evidence="1">
    <location>
        <begin position="144"/>
        <end position="164"/>
    </location>
</feature>
<feature type="transmembrane region" description="Helical" evidence="1">
    <location>
        <begin position="212"/>
        <end position="232"/>
    </location>
</feature>
<dbReference type="EMBL" id="BX571857">
    <property type="protein sequence ID" value="CAG42010.1"/>
    <property type="molecule type" value="Genomic_DNA"/>
</dbReference>
<dbReference type="RefSeq" id="WP_000607067.1">
    <property type="nucleotide sequence ID" value="NC_002953.3"/>
</dbReference>
<dbReference type="KEGG" id="sas:SAS0240"/>
<dbReference type="HOGENOM" id="CLU_082099_1_0_9"/>
<dbReference type="GO" id="GO:0005886">
    <property type="term" value="C:plasma membrane"/>
    <property type="evidence" value="ECO:0007669"/>
    <property type="project" value="UniProtKB-SubCell"/>
</dbReference>
<dbReference type="GO" id="GO:0019835">
    <property type="term" value="P:cytolysis"/>
    <property type="evidence" value="ECO:0007669"/>
    <property type="project" value="UniProtKB-UniRule"/>
</dbReference>
<dbReference type="GO" id="GO:0031640">
    <property type="term" value="P:killing of cells of another organism"/>
    <property type="evidence" value="ECO:0007669"/>
    <property type="project" value="UniProtKB-KW"/>
</dbReference>
<dbReference type="GO" id="GO:0012501">
    <property type="term" value="P:programmed cell death"/>
    <property type="evidence" value="ECO:0007669"/>
    <property type="project" value="UniProtKB-UniRule"/>
</dbReference>
<dbReference type="HAMAP" id="MF_01142">
    <property type="entry name" value="LrgB"/>
    <property type="match status" value="1"/>
</dbReference>
<dbReference type="InterPro" id="IPR024891">
    <property type="entry name" value="Antiholin-like_LrgB"/>
</dbReference>
<dbReference type="InterPro" id="IPR007300">
    <property type="entry name" value="CidB/LrgB"/>
</dbReference>
<dbReference type="NCBIfam" id="NF003291">
    <property type="entry name" value="PRK04288.1"/>
    <property type="match status" value="1"/>
</dbReference>
<dbReference type="PANTHER" id="PTHR30249:SF0">
    <property type="entry name" value="PLASTIDAL GLYCOLATE_GLYCERATE TRANSLOCATOR 1, CHLOROPLASTIC"/>
    <property type="match status" value="1"/>
</dbReference>
<dbReference type="PANTHER" id="PTHR30249">
    <property type="entry name" value="PUTATIVE SEROTONIN TRANSPORTER"/>
    <property type="match status" value="1"/>
</dbReference>
<dbReference type="Pfam" id="PF04172">
    <property type="entry name" value="LrgB"/>
    <property type="match status" value="1"/>
</dbReference>
<proteinExistence type="inferred from homology"/>
<evidence type="ECO:0000255" key="1">
    <source>
        <dbReference type="HAMAP-Rule" id="MF_01142"/>
    </source>
</evidence>
<organism>
    <name type="scientific">Staphylococcus aureus (strain MSSA476)</name>
    <dbReference type="NCBI Taxonomy" id="282459"/>
    <lineage>
        <taxon>Bacteria</taxon>
        <taxon>Bacillati</taxon>
        <taxon>Bacillota</taxon>
        <taxon>Bacilli</taxon>
        <taxon>Bacillales</taxon>
        <taxon>Staphylococcaceae</taxon>
        <taxon>Staphylococcus</taxon>
    </lineage>
</organism>
<protein>
    <recommendedName>
        <fullName evidence="1">Antiholin-like protein LrgB</fullName>
    </recommendedName>
</protein>
<sequence length="233" mass="25097">MINHLALNTPYFGILLSVIPFFLATILFEKTNRFFLFAPLFVSMVFGVAFLYLTGIPYKTYKIGGDIIYFFLEPATICFAIPLYKKREVLVKHWHRIIGGIGIGTVVALLIILTFAKLAQFANDVILSMLPQAATTAIALPVSAGIGGIKELTSLAVILNGVIIYALGNKFLKLFRITNPIARGLALGTSGHTLGVAPAKELGPVEESMASIALVLVGVVVVAVVPVFVAIFF</sequence>
<accession>Q6GCK9</accession>
<gene>
    <name evidence="1" type="primary">lrgB</name>
    <name type="ordered locus">SAS0240</name>
</gene>
<comment type="function">
    <text evidence="1">Inhibits the expression or activity of extracellular murein hydrolases by interacting, possibly with LrgA, with the holin-like proteins CidA and/or CidB. The LrgAB and CidAB proteins may affect the proton motive force of the membrane. May be involved in programmed cell death (PCD), possibly triggering PCD in response to antibiotics and environmental stresses.</text>
</comment>
<comment type="subcellular location">
    <subcellularLocation>
        <location evidence="1">Cell membrane</location>
        <topology evidence="1">Multi-pass membrane protein</topology>
    </subcellularLocation>
</comment>
<comment type="similarity">
    <text evidence="1">Belongs to the CidB/LrgB family. LrgB subfamily.</text>
</comment>
<name>LRGB_STAAS</name>